<feature type="chain" id="PRO_1000137628" description="Protein GrpE">
    <location>
        <begin position="1"/>
        <end position="209"/>
    </location>
</feature>
<feature type="region of interest" description="Disordered" evidence="2">
    <location>
        <begin position="1"/>
        <end position="33"/>
    </location>
</feature>
<feature type="compositionally biased region" description="Polar residues" evidence="2">
    <location>
        <begin position="1"/>
        <end position="13"/>
    </location>
</feature>
<feature type="compositionally biased region" description="Acidic residues" evidence="2">
    <location>
        <begin position="15"/>
        <end position="31"/>
    </location>
</feature>
<name>GRPE_SHEWM</name>
<reference key="1">
    <citation type="submission" date="2008-02" db="EMBL/GenBank/DDBJ databases">
        <title>Complete sequence of Shewanella woodyi ATCC 51908.</title>
        <authorList>
            <consortium name="US DOE Joint Genome Institute"/>
            <person name="Copeland A."/>
            <person name="Lucas S."/>
            <person name="Lapidus A."/>
            <person name="Glavina del Rio T."/>
            <person name="Dalin E."/>
            <person name="Tice H."/>
            <person name="Bruce D."/>
            <person name="Goodwin L."/>
            <person name="Pitluck S."/>
            <person name="Sims D."/>
            <person name="Brettin T."/>
            <person name="Detter J.C."/>
            <person name="Han C."/>
            <person name="Kuske C.R."/>
            <person name="Schmutz J."/>
            <person name="Larimer F."/>
            <person name="Land M."/>
            <person name="Hauser L."/>
            <person name="Kyrpides N."/>
            <person name="Lykidis A."/>
            <person name="Zhao J.-S."/>
            <person name="Richardson P."/>
        </authorList>
    </citation>
    <scope>NUCLEOTIDE SEQUENCE [LARGE SCALE GENOMIC DNA]</scope>
    <source>
        <strain>ATCC 51908 / MS32</strain>
    </source>
</reference>
<sequence>MSNDSSKAKQNQVDEAVEGEILTESEVETGNDEASLMDELTQANFRVEELEQALAEANAKIEEQKDSVTRAAASEANIRRRAAQDVEKAHKFALEKFANELLPVIDNMERALQGTNAEAEETKAIYEGVELTLKSFVSTVDKFGLKEVNPHGESFNPEHHQAIGMQPSPEFPANTVMMVMQKGYILNDRLLRPAMVMVSQGGSGVDTQA</sequence>
<dbReference type="EMBL" id="CP000961">
    <property type="protein sequence ID" value="ACA87745.1"/>
    <property type="molecule type" value="Genomic_DNA"/>
</dbReference>
<dbReference type="RefSeq" id="WP_012326079.1">
    <property type="nucleotide sequence ID" value="NC_010506.1"/>
</dbReference>
<dbReference type="SMR" id="B1KQY9"/>
<dbReference type="STRING" id="392500.Swoo_3479"/>
<dbReference type="KEGG" id="swd:Swoo_3479"/>
<dbReference type="eggNOG" id="COG0576">
    <property type="taxonomic scope" value="Bacteria"/>
</dbReference>
<dbReference type="HOGENOM" id="CLU_057217_6_0_6"/>
<dbReference type="Proteomes" id="UP000002168">
    <property type="component" value="Chromosome"/>
</dbReference>
<dbReference type="GO" id="GO:0005829">
    <property type="term" value="C:cytosol"/>
    <property type="evidence" value="ECO:0007669"/>
    <property type="project" value="TreeGrafter"/>
</dbReference>
<dbReference type="GO" id="GO:0000774">
    <property type="term" value="F:adenyl-nucleotide exchange factor activity"/>
    <property type="evidence" value="ECO:0007669"/>
    <property type="project" value="InterPro"/>
</dbReference>
<dbReference type="GO" id="GO:0042803">
    <property type="term" value="F:protein homodimerization activity"/>
    <property type="evidence" value="ECO:0007669"/>
    <property type="project" value="InterPro"/>
</dbReference>
<dbReference type="GO" id="GO:0051087">
    <property type="term" value="F:protein-folding chaperone binding"/>
    <property type="evidence" value="ECO:0007669"/>
    <property type="project" value="InterPro"/>
</dbReference>
<dbReference type="GO" id="GO:0051082">
    <property type="term" value="F:unfolded protein binding"/>
    <property type="evidence" value="ECO:0007669"/>
    <property type="project" value="TreeGrafter"/>
</dbReference>
<dbReference type="GO" id="GO:0006457">
    <property type="term" value="P:protein folding"/>
    <property type="evidence" value="ECO:0007669"/>
    <property type="project" value="InterPro"/>
</dbReference>
<dbReference type="CDD" id="cd00446">
    <property type="entry name" value="GrpE"/>
    <property type="match status" value="1"/>
</dbReference>
<dbReference type="FunFam" id="2.30.22.10:FF:000001">
    <property type="entry name" value="Protein GrpE"/>
    <property type="match status" value="1"/>
</dbReference>
<dbReference type="Gene3D" id="3.90.20.20">
    <property type="match status" value="1"/>
</dbReference>
<dbReference type="Gene3D" id="2.30.22.10">
    <property type="entry name" value="Head domain of nucleotide exchange factor GrpE"/>
    <property type="match status" value="1"/>
</dbReference>
<dbReference type="HAMAP" id="MF_01151">
    <property type="entry name" value="GrpE"/>
    <property type="match status" value="1"/>
</dbReference>
<dbReference type="InterPro" id="IPR000740">
    <property type="entry name" value="GrpE"/>
</dbReference>
<dbReference type="InterPro" id="IPR013805">
    <property type="entry name" value="GrpE_coiled_coil"/>
</dbReference>
<dbReference type="InterPro" id="IPR009012">
    <property type="entry name" value="GrpE_head"/>
</dbReference>
<dbReference type="NCBIfam" id="NF010737">
    <property type="entry name" value="PRK14139.1"/>
    <property type="match status" value="1"/>
</dbReference>
<dbReference type="NCBIfam" id="NF010738">
    <property type="entry name" value="PRK14140.1"/>
    <property type="match status" value="1"/>
</dbReference>
<dbReference type="NCBIfam" id="NF010748">
    <property type="entry name" value="PRK14150.1"/>
    <property type="match status" value="1"/>
</dbReference>
<dbReference type="PANTHER" id="PTHR21237">
    <property type="entry name" value="GRPE PROTEIN"/>
    <property type="match status" value="1"/>
</dbReference>
<dbReference type="PANTHER" id="PTHR21237:SF23">
    <property type="entry name" value="GRPE PROTEIN HOMOLOG, MITOCHONDRIAL"/>
    <property type="match status" value="1"/>
</dbReference>
<dbReference type="Pfam" id="PF01025">
    <property type="entry name" value="GrpE"/>
    <property type="match status" value="1"/>
</dbReference>
<dbReference type="PRINTS" id="PR00773">
    <property type="entry name" value="GRPEPROTEIN"/>
</dbReference>
<dbReference type="SUPFAM" id="SSF58014">
    <property type="entry name" value="Coiled-coil domain of nucleotide exchange factor GrpE"/>
    <property type="match status" value="1"/>
</dbReference>
<dbReference type="SUPFAM" id="SSF51064">
    <property type="entry name" value="Head domain of nucleotide exchange factor GrpE"/>
    <property type="match status" value="1"/>
</dbReference>
<dbReference type="PROSITE" id="PS01071">
    <property type="entry name" value="GRPE"/>
    <property type="match status" value="1"/>
</dbReference>
<gene>
    <name evidence="1" type="primary">grpE</name>
    <name type="ordered locus">Swoo_3479</name>
</gene>
<evidence type="ECO:0000255" key="1">
    <source>
        <dbReference type="HAMAP-Rule" id="MF_01151"/>
    </source>
</evidence>
<evidence type="ECO:0000256" key="2">
    <source>
        <dbReference type="SAM" id="MobiDB-lite"/>
    </source>
</evidence>
<organism>
    <name type="scientific">Shewanella woodyi (strain ATCC 51908 / MS32)</name>
    <dbReference type="NCBI Taxonomy" id="392500"/>
    <lineage>
        <taxon>Bacteria</taxon>
        <taxon>Pseudomonadati</taxon>
        <taxon>Pseudomonadota</taxon>
        <taxon>Gammaproteobacteria</taxon>
        <taxon>Alteromonadales</taxon>
        <taxon>Shewanellaceae</taxon>
        <taxon>Shewanella</taxon>
    </lineage>
</organism>
<proteinExistence type="inferred from homology"/>
<protein>
    <recommendedName>
        <fullName evidence="1">Protein GrpE</fullName>
    </recommendedName>
    <alternativeName>
        <fullName evidence="1">HSP-70 cofactor</fullName>
    </alternativeName>
</protein>
<comment type="function">
    <text evidence="1">Participates actively in the response to hyperosmotic and heat shock by preventing the aggregation of stress-denatured proteins, in association with DnaK and GrpE. It is the nucleotide exchange factor for DnaK and may function as a thermosensor. Unfolded proteins bind initially to DnaJ; upon interaction with the DnaJ-bound protein, DnaK hydrolyzes its bound ATP, resulting in the formation of a stable complex. GrpE releases ADP from DnaK; ATP binding to DnaK triggers the release of the substrate protein, thus completing the reaction cycle. Several rounds of ATP-dependent interactions between DnaJ, DnaK and GrpE are required for fully efficient folding.</text>
</comment>
<comment type="subunit">
    <text evidence="1">Homodimer.</text>
</comment>
<comment type="subcellular location">
    <subcellularLocation>
        <location evidence="1">Cytoplasm</location>
    </subcellularLocation>
</comment>
<comment type="similarity">
    <text evidence="1">Belongs to the GrpE family.</text>
</comment>
<accession>B1KQY9</accession>
<keyword id="KW-0143">Chaperone</keyword>
<keyword id="KW-0963">Cytoplasm</keyword>
<keyword id="KW-1185">Reference proteome</keyword>
<keyword id="KW-0346">Stress response</keyword>